<name>RL10_NEIMB</name>
<accession>P66047</accession>
<accession>Q9JQP7</accession>
<dbReference type="EMBL" id="AE002098">
    <property type="protein sequence ID" value="AAF40589.1"/>
    <property type="molecule type" value="Genomic_DNA"/>
</dbReference>
<dbReference type="PIR" id="G81235">
    <property type="entry name" value="G81235"/>
</dbReference>
<dbReference type="RefSeq" id="NP_273188.1">
    <property type="nucleotide sequence ID" value="NC_003112.2"/>
</dbReference>
<dbReference type="RefSeq" id="WP_002215373.1">
    <property type="nucleotide sequence ID" value="NC_003112.2"/>
</dbReference>
<dbReference type="SMR" id="P66047"/>
<dbReference type="FunCoup" id="P66047">
    <property type="interactions" value="569"/>
</dbReference>
<dbReference type="STRING" id="122586.NMB0130"/>
<dbReference type="PaxDb" id="122586-NMB0130"/>
<dbReference type="GeneID" id="93387205"/>
<dbReference type="KEGG" id="nme:NMB0130"/>
<dbReference type="PATRIC" id="fig|122586.8.peg.169"/>
<dbReference type="HOGENOM" id="CLU_092227_0_1_4"/>
<dbReference type="InParanoid" id="P66047"/>
<dbReference type="OrthoDB" id="9808307at2"/>
<dbReference type="Proteomes" id="UP000000425">
    <property type="component" value="Chromosome"/>
</dbReference>
<dbReference type="GO" id="GO:0022625">
    <property type="term" value="C:cytosolic large ribosomal subunit"/>
    <property type="evidence" value="ECO:0000318"/>
    <property type="project" value="GO_Central"/>
</dbReference>
<dbReference type="GO" id="GO:0070180">
    <property type="term" value="F:large ribosomal subunit rRNA binding"/>
    <property type="evidence" value="ECO:0007669"/>
    <property type="project" value="UniProtKB-UniRule"/>
</dbReference>
<dbReference type="GO" id="GO:0003735">
    <property type="term" value="F:structural constituent of ribosome"/>
    <property type="evidence" value="ECO:0000318"/>
    <property type="project" value="GO_Central"/>
</dbReference>
<dbReference type="GO" id="GO:0006412">
    <property type="term" value="P:translation"/>
    <property type="evidence" value="ECO:0000318"/>
    <property type="project" value="GO_Central"/>
</dbReference>
<dbReference type="CDD" id="cd05797">
    <property type="entry name" value="Ribosomal_L10"/>
    <property type="match status" value="1"/>
</dbReference>
<dbReference type="FunFam" id="3.30.70.1730:FF:000008">
    <property type="entry name" value="50S ribosomal protein L10"/>
    <property type="match status" value="1"/>
</dbReference>
<dbReference type="Gene3D" id="3.30.70.1730">
    <property type="match status" value="1"/>
</dbReference>
<dbReference type="Gene3D" id="6.10.250.290">
    <property type="match status" value="1"/>
</dbReference>
<dbReference type="HAMAP" id="MF_00362">
    <property type="entry name" value="Ribosomal_uL10"/>
    <property type="match status" value="1"/>
</dbReference>
<dbReference type="InterPro" id="IPR001790">
    <property type="entry name" value="Ribosomal_uL10"/>
</dbReference>
<dbReference type="InterPro" id="IPR043141">
    <property type="entry name" value="Ribosomal_uL10-like_sf"/>
</dbReference>
<dbReference type="InterPro" id="IPR022973">
    <property type="entry name" value="Ribosomal_uL10_bac"/>
</dbReference>
<dbReference type="InterPro" id="IPR047865">
    <property type="entry name" value="Ribosomal_uL10_bac_type"/>
</dbReference>
<dbReference type="InterPro" id="IPR002363">
    <property type="entry name" value="Ribosomal_uL10_CS_bac"/>
</dbReference>
<dbReference type="NCBIfam" id="NF000955">
    <property type="entry name" value="PRK00099.1-1"/>
    <property type="match status" value="1"/>
</dbReference>
<dbReference type="PANTHER" id="PTHR11560">
    <property type="entry name" value="39S RIBOSOMAL PROTEIN L10, MITOCHONDRIAL"/>
    <property type="match status" value="1"/>
</dbReference>
<dbReference type="Pfam" id="PF00466">
    <property type="entry name" value="Ribosomal_L10"/>
    <property type="match status" value="1"/>
</dbReference>
<dbReference type="SUPFAM" id="SSF160369">
    <property type="entry name" value="Ribosomal protein L10-like"/>
    <property type="match status" value="1"/>
</dbReference>
<dbReference type="PROSITE" id="PS01109">
    <property type="entry name" value="RIBOSOMAL_L10"/>
    <property type="match status" value="1"/>
</dbReference>
<proteinExistence type="inferred from homology"/>
<protein>
    <recommendedName>
        <fullName evidence="2">Large ribosomal subunit protein uL10</fullName>
    </recommendedName>
    <alternativeName>
        <fullName>50S ribosomal protein L10</fullName>
    </alternativeName>
</protein>
<evidence type="ECO:0000250" key="1"/>
<evidence type="ECO:0000305" key="2"/>
<feature type="chain" id="PRO_0000154676" description="Large ribosomal subunit protein uL10">
    <location>
        <begin position="1"/>
        <end position="166"/>
    </location>
</feature>
<organism>
    <name type="scientific">Neisseria meningitidis serogroup B (strain ATCC BAA-335 / MC58)</name>
    <dbReference type="NCBI Taxonomy" id="122586"/>
    <lineage>
        <taxon>Bacteria</taxon>
        <taxon>Pseudomonadati</taxon>
        <taxon>Pseudomonadota</taxon>
        <taxon>Betaproteobacteria</taxon>
        <taxon>Neisseriales</taxon>
        <taxon>Neisseriaceae</taxon>
        <taxon>Neisseria</taxon>
    </lineage>
</organism>
<comment type="function">
    <text evidence="1">Forms part of the ribosomal stalk, playing a central role in the interaction of the ribosome with GTP-bound translation factors.</text>
</comment>
<comment type="subunit">
    <text evidence="1">Part of the ribosomal stalk of the 50S ribosomal subunit. The N-terminus interacts with L11 and the large rRNA to form the base of the stalk. The C-terminus forms an elongated spine to which L12 dimers bind in a sequential fashion forming a multimeric L10(L12)X complex (By similarity).</text>
</comment>
<comment type="similarity">
    <text evidence="2">Belongs to the universal ribosomal protein uL10 family.</text>
</comment>
<keyword id="KW-1185">Reference proteome</keyword>
<keyword id="KW-0687">Ribonucleoprotein</keyword>
<keyword id="KW-0689">Ribosomal protein</keyword>
<keyword id="KW-0694">RNA-binding</keyword>
<keyword id="KW-0699">rRNA-binding</keyword>
<reference key="1">
    <citation type="journal article" date="2000" name="Science">
        <title>Complete genome sequence of Neisseria meningitidis serogroup B strain MC58.</title>
        <authorList>
            <person name="Tettelin H."/>
            <person name="Saunders N.J."/>
            <person name="Heidelberg J.F."/>
            <person name="Jeffries A.C."/>
            <person name="Nelson K.E."/>
            <person name="Eisen J.A."/>
            <person name="Ketchum K.A."/>
            <person name="Hood D.W."/>
            <person name="Peden J.F."/>
            <person name="Dodson R.J."/>
            <person name="Nelson W.C."/>
            <person name="Gwinn M.L."/>
            <person name="DeBoy R.T."/>
            <person name="Peterson J.D."/>
            <person name="Hickey E.K."/>
            <person name="Haft D.H."/>
            <person name="Salzberg S.L."/>
            <person name="White O."/>
            <person name="Fleischmann R.D."/>
            <person name="Dougherty B.A."/>
            <person name="Mason T.M."/>
            <person name="Ciecko A."/>
            <person name="Parksey D.S."/>
            <person name="Blair E."/>
            <person name="Cittone H."/>
            <person name="Clark E.B."/>
            <person name="Cotton M.D."/>
            <person name="Utterback T.R."/>
            <person name="Khouri H.M."/>
            <person name="Qin H."/>
            <person name="Vamathevan J.J."/>
            <person name="Gill J."/>
            <person name="Scarlato V."/>
            <person name="Masignani V."/>
            <person name="Pizza M."/>
            <person name="Grandi G."/>
            <person name="Sun L."/>
            <person name="Smith H.O."/>
            <person name="Fraser C.M."/>
            <person name="Moxon E.R."/>
            <person name="Rappuoli R."/>
            <person name="Venter J.C."/>
        </authorList>
    </citation>
    <scope>NUCLEOTIDE SEQUENCE [LARGE SCALE GENOMIC DNA]</scope>
    <source>
        <strain>ATCC BAA-335 / MC58</strain>
    </source>
</reference>
<sequence>MSLNIETKKVAVEEISAAIANAQTLVVAEYRGISVSSMTELRANARKEGVYLRVLKNTLARRAVQGTSFAELADQMVGPLVYAASEDAVAAAKVLHQFAKKDDKIVVKAGSYNGEVMNAAQVAELASIPSREELLSKLLFVMQAPVSGFARGLAALAEKKAGEEAA</sequence>
<gene>
    <name type="primary">rplJ</name>
    <name type="ordered locus">NMB0130</name>
</gene>